<feature type="chain" id="PRO_0000291167" description="UPF0434 protein Shewana3_2582">
    <location>
        <begin position="1"/>
        <end position="59"/>
    </location>
</feature>
<sequence>MAFDKKLLDIVACPVCKGKLEYDKTTQQLICKADKLAYPITDGIPVLLENRAVPLNEAV</sequence>
<evidence type="ECO:0000255" key="1">
    <source>
        <dbReference type="HAMAP-Rule" id="MF_01187"/>
    </source>
</evidence>
<comment type="similarity">
    <text evidence="1">Belongs to the UPF0434 family.</text>
</comment>
<proteinExistence type="inferred from homology"/>
<accession>A0KYE0</accession>
<gene>
    <name type="ordered locus">Shewana3_2582</name>
</gene>
<protein>
    <recommendedName>
        <fullName evidence="1">UPF0434 protein Shewana3_2582</fullName>
    </recommendedName>
</protein>
<name>Y2582_SHESA</name>
<dbReference type="EMBL" id="CP000469">
    <property type="protein sequence ID" value="ABK48809.1"/>
    <property type="molecule type" value="Genomic_DNA"/>
</dbReference>
<dbReference type="RefSeq" id="WP_011623174.1">
    <property type="nucleotide sequence ID" value="NC_008577.1"/>
</dbReference>
<dbReference type="SMR" id="A0KYE0"/>
<dbReference type="STRING" id="94122.Shewana3_2582"/>
<dbReference type="KEGG" id="shn:Shewana3_2582"/>
<dbReference type="eggNOG" id="COG2835">
    <property type="taxonomic scope" value="Bacteria"/>
</dbReference>
<dbReference type="HOGENOM" id="CLU_155659_3_1_6"/>
<dbReference type="OrthoDB" id="9812205at2"/>
<dbReference type="Proteomes" id="UP000002589">
    <property type="component" value="Chromosome"/>
</dbReference>
<dbReference type="GO" id="GO:0005829">
    <property type="term" value="C:cytosol"/>
    <property type="evidence" value="ECO:0007669"/>
    <property type="project" value="TreeGrafter"/>
</dbReference>
<dbReference type="FunFam" id="2.20.25.10:FF:000002">
    <property type="entry name" value="UPF0434 protein YcaR"/>
    <property type="match status" value="1"/>
</dbReference>
<dbReference type="Gene3D" id="2.20.25.10">
    <property type="match status" value="1"/>
</dbReference>
<dbReference type="HAMAP" id="MF_01187">
    <property type="entry name" value="UPF0434"/>
    <property type="match status" value="1"/>
</dbReference>
<dbReference type="InterPro" id="IPR005651">
    <property type="entry name" value="Trm112-like"/>
</dbReference>
<dbReference type="PANTHER" id="PTHR33505:SF4">
    <property type="entry name" value="PROTEIN PREY, MITOCHONDRIAL"/>
    <property type="match status" value="1"/>
</dbReference>
<dbReference type="PANTHER" id="PTHR33505">
    <property type="entry name" value="ZGC:162634"/>
    <property type="match status" value="1"/>
</dbReference>
<dbReference type="Pfam" id="PF03966">
    <property type="entry name" value="Trm112p"/>
    <property type="match status" value="1"/>
</dbReference>
<dbReference type="SUPFAM" id="SSF158997">
    <property type="entry name" value="Trm112p-like"/>
    <property type="match status" value="1"/>
</dbReference>
<organism>
    <name type="scientific">Shewanella sp. (strain ANA-3)</name>
    <dbReference type="NCBI Taxonomy" id="94122"/>
    <lineage>
        <taxon>Bacteria</taxon>
        <taxon>Pseudomonadati</taxon>
        <taxon>Pseudomonadota</taxon>
        <taxon>Gammaproteobacteria</taxon>
        <taxon>Alteromonadales</taxon>
        <taxon>Shewanellaceae</taxon>
        <taxon>Shewanella</taxon>
    </lineage>
</organism>
<reference key="1">
    <citation type="submission" date="2006-09" db="EMBL/GenBank/DDBJ databases">
        <title>Complete sequence of chromosome 1 of Shewanella sp. ANA-3.</title>
        <authorList>
            <person name="Copeland A."/>
            <person name="Lucas S."/>
            <person name="Lapidus A."/>
            <person name="Barry K."/>
            <person name="Detter J.C."/>
            <person name="Glavina del Rio T."/>
            <person name="Hammon N."/>
            <person name="Israni S."/>
            <person name="Dalin E."/>
            <person name="Tice H."/>
            <person name="Pitluck S."/>
            <person name="Chertkov O."/>
            <person name="Brettin T."/>
            <person name="Bruce D."/>
            <person name="Han C."/>
            <person name="Tapia R."/>
            <person name="Gilna P."/>
            <person name="Schmutz J."/>
            <person name="Larimer F."/>
            <person name="Land M."/>
            <person name="Hauser L."/>
            <person name="Kyrpides N."/>
            <person name="Kim E."/>
            <person name="Newman D."/>
            <person name="Salticov C."/>
            <person name="Konstantinidis K."/>
            <person name="Klappenback J."/>
            <person name="Tiedje J."/>
            <person name="Richardson P."/>
        </authorList>
    </citation>
    <scope>NUCLEOTIDE SEQUENCE [LARGE SCALE GENOMIC DNA]</scope>
    <source>
        <strain>ANA-3</strain>
    </source>
</reference>